<gene>
    <name type="ORF">DDB_G0280557</name>
</gene>
<comment type="catalytic activity">
    <reaction>
        <text>L-seryl-[protein] + ATP = O-phospho-L-seryl-[protein] + ADP + H(+)</text>
        <dbReference type="Rhea" id="RHEA:17989"/>
        <dbReference type="Rhea" id="RHEA-COMP:9863"/>
        <dbReference type="Rhea" id="RHEA-COMP:11604"/>
        <dbReference type="ChEBI" id="CHEBI:15378"/>
        <dbReference type="ChEBI" id="CHEBI:29999"/>
        <dbReference type="ChEBI" id="CHEBI:30616"/>
        <dbReference type="ChEBI" id="CHEBI:83421"/>
        <dbReference type="ChEBI" id="CHEBI:456216"/>
        <dbReference type="EC" id="2.7.11.1"/>
    </reaction>
</comment>
<comment type="catalytic activity">
    <reaction>
        <text>L-threonyl-[protein] + ATP = O-phospho-L-threonyl-[protein] + ADP + H(+)</text>
        <dbReference type="Rhea" id="RHEA:46608"/>
        <dbReference type="Rhea" id="RHEA-COMP:11060"/>
        <dbReference type="Rhea" id="RHEA-COMP:11605"/>
        <dbReference type="ChEBI" id="CHEBI:15378"/>
        <dbReference type="ChEBI" id="CHEBI:30013"/>
        <dbReference type="ChEBI" id="CHEBI:30616"/>
        <dbReference type="ChEBI" id="CHEBI:61977"/>
        <dbReference type="ChEBI" id="CHEBI:456216"/>
        <dbReference type="EC" id="2.7.11.1"/>
    </reaction>
</comment>
<comment type="similarity">
    <text evidence="2">Belongs to the protein kinase superfamily. CMGC Ser/Thr protein kinase family. MAP kinase subfamily.</text>
</comment>
<proteinExistence type="inferred from homology"/>
<evidence type="ECO:0000255" key="1">
    <source>
        <dbReference type="PROSITE-ProRule" id="PRU00159"/>
    </source>
</evidence>
<evidence type="ECO:0000305" key="2"/>
<feature type="chain" id="PRO_0000358905" description="Probable serine/threonine-protein kinase kinase DDB_G0280557">
    <location>
        <begin position="1"/>
        <end position="460"/>
    </location>
</feature>
<feature type="domain" description="Protein kinase" evidence="1">
    <location>
        <begin position="102"/>
        <end position="416"/>
    </location>
</feature>
<feature type="active site" description="Proton acceptor" evidence="1">
    <location>
        <position position="250"/>
    </location>
</feature>
<feature type="binding site" evidence="1">
    <location>
        <position position="131"/>
    </location>
    <ligand>
        <name>ATP</name>
        <dbReference type="ChEBI" id="CHEBI:30616"/>
    </ligand>
</feature>
<feature type="binding site" evidence="1">
    <location>
        <begin position="154"/>
        <end position="162"/>
    </location>
    <ligand>
        <name>ATP</name>
        <dbReference type="ChEBI" id="CHEBI:30616"/>
    </ligand>
</feature>
<dbReference type="EC" id="2.7.11.1"/>
<dbReference type="EMBL" id="AAFI02000037">
    <property type="protein sequence ID" value="EAL67080.1"/>
    <property type="molecule type" value="Genomic_DNA"/>
</dbReference>
<dbReference type="RefSeq" id="XP_641048.1">
    <property type="nucleotide sequence ID" value="XM_635956.1"/>
</dbReference>
<dbReference type="SMR" id="Q54V83"/>
<dbReference type="STRING" id="44689.Q54V83"/>
<dbReference type="GlyGen" id="Q54V83">
    <property type="glycosylation" value="1 site"/>
</dbReference>
<dbReference type="PaxDb" id="44689-DDB0229296"/>
<dbReference type="EnsemblProtists" id="EAL67080">
    <property type="protein sequence ID" value="EAL67080"/>
    <property type="gene ID" value="DDB_G0280557"/>
</dbReference>
<dbReference type="GeneID" id="8622606"/>
<dbReference type="KEGG" id="ddi:DDB_G0280557"/>
<dbReference type="dictyBase" id="DDB_G0280557"/>
<dbReference type="VEuPathDB" id="AmoebaDB:DDB_G0280557"/>
<dbReference type="eggNOG" id="KOG0660">
    <property type="taxonomic scope" value="Eukaryota"/>
</dbReference>
<dbReference type="HOGENOM" id="CLU_620278_0_0_1"/>
<dbReference type="InParanoid" id="Q54V83"/>
<dbReference type="PhylomeDB" id="Q54V83"/>
<dbReference type="Reactome" id="R-DDI-168638">
    <property type="pathway name" value="NOD1/2 Signaling Pathway"/>
</dbReference>
<dbReference type="Reactome" id="R-DDI-193648">
    <property type="pathway name" value="NRAGE signals death through JNK"/>
</dbReference>
<dbReference type="Reactome" id="R-DDI-198753">
    <property type="pathway name" value="ERK/MAPK targets"/>
</dbReference>
<dbReference type="Reactome" id="R-DDI-2559580">
    <property type="pathway name" value="Oxidative Stress Induced Senescence"/>
</dbReference>
<dbReference type="Reactome" id="R-DDI-2871796">
    <property type="pathway name" value="FCERI mediated MAPK activation"/>
</dbReference>
<dbReference type="Reactome" id="R-DDI-418592">
    <property type="pathway name" value="ADP signalling through P2Y purinoceptor 1"/>
</dbReference>
<dbReference type="Reactome" id="R-DDI-450321">
    <property type="pathway name" value="JNK (c-Jun kinases) phosphorylation and activation mediated by activated human TAK1"/>
</dbReference>
<dbReference type="Reactome" id="R-DDI-525793">
    <property type="pathway name" value="Myogenesis"/>
</dbReference>
<dbReference type="Reactome" id="R-DDI-6798695">
    <property type="pathway name" value="Neutrophil degranulation"/>
</dbReference>
<dbReference type="Reactome" id="R-DDI-9007892">
    <property type="pathway name" value="Interleukin-38 signaling"/>
</dbReference>
<dbReference type="PRO" id="PR:Q54V83"/>
<dbReference type="Proteomes" id="UP000002195">
    <property type="component" value="Chromosome 3"/>
</dbReference>
<dbReference type="GO" id="GO:0005737">
    <property type="term" value="C:cytoplasm"/>
    <property type="evidence" value="ECO:0000318"/>
    <property type="project" value="GO_Central"/>
</dbReference>
<dbReference type="GO" id="GO:0005634">
    <property type="term" value="C:nucleus"/>
    <property type="evidence" value="ECO:0000318"/>
    <property type="project" value="GO_Central"/>
</dbReference>
<dbReference type="GO" id="GO:0005524">
    <property type="term" value="F:ATP binding"/>
    <property type="evidence" value="ECO:0007669"/>
    <property type="project" value="UniProtKB-KW"/>
</dbReference>
<dbReference type="GO" id="GO:0106310">
    <property type="term" value="F:protein serine kinase activity"/>
    <property type="evidence" value="ECO:0007669"/>
    <property type="project" value="RHEA"/>
</dbReference>
<dbReference type="GO" id="GO:0004674">
    <property type="term" value="F:protein serine/threonine kinase activity"/>
    <property type="evidence" value="ECO:0000318"/>
    <property type="project" value="GO_Central"/>
</dbReference>
<dbReference type="GO" id="GO:0035556">
    <property type="term" value="P:intracellular signal transduction"/>
    <property type="evidence" value="ECO:0000318"/>
    <property type="project" value="GO_Central"/>
</dbReference>
<dbReference type="FunFam" id="1.10.510.10:FF:002189">
    <property type="entry name" value="Probable inactive serine/threonine-protein kinase DDB_G0280855"/>
    <property type="match status" value="1"/>
</dbReference>
<dbReference type="Gene3D" id="3.30.200.20">
    <property type="entry name" value="Phosphorylase Kinase, domain 1"/>
    <property type="match status" value="2"/>
</dbReference>
<dbReference type="Gene3D" id="1.10.510.10">
    <property type="entry name" value="Transferase(Phosphotransferase) domain 1"/>
    <property type="match status" value="1"/>
</dbReference>
<dbReference type="InterPro" id="IPR011009">
    <property type="entry name" value="Kinase-like_dom_sf"/>
</dbReference>
<dbReference type="InterPro" id="IPR050117">
    <property type="entry name" value="MAP_kinase"/>
</dbReference>
<dbReference type="InterPro" id="IPR000719">
    <property type="entry name" value="Prot_kinase_dom"/>
</dbReference>
<dbReference type="PANTHER" id="PTHR24055">
    <property type="entry name" value="MITOGEN-ACTIVATED PROTEIN KINASE"/>
    <property type="match status" value="1"/>
</dbReference>
<dbReference type="Pfam" id="PF00069">
    <property type="entry name" value="Pkinase"/>
    <property type="match status" value="1"/>
</dbReference>
<dbReference type="SMART" id="SM00220">
    <property type="entry name" value="S_TKc"/>
    <property type="match status" value="1"/>
</dbReference>
<dbReference type="SUPFAM" id="SSF56112">
    <property type="entry name" value="Protein kinase-like (PK-like)"/>
    <property type="match status" value="1"/>
</dbReference>
<dbReference type="PROSITE" id="PS50011">
    <property type="entry name" value="PROTEIN_KINASE_DOM"/>
    <property type="match status" value="1"/>
</dbReference>
<keyword id="KW-0067">ATP-binding</keyword>
<keyword id="KW-0418">Kinase</keyword>
<keyword id="KW-0547">Nucleotide-binding</keyword>
<keyword id="KW-1185">Reference proteome</keyword>
<keyword id="KW-0723">Serine/threonine-protein kinase</keyword>
<keyword id="KW-0808">Transferase</keyword>
<accession>Q54V83</accession>
<sequence>MEINKIIEINNNNNNNNNKIIENNNDNKKIIEINNNNNDNNKIIEINDNNNNNIKDKILKKENKDSILMKPPPIFITPANKDDTITVFHQGHIISIPRKLKINLKSITDCGPDGVMFRAKNEDSKEEVIVKKISVFLMKDDKMARKLLRNLLFQRHFQQHPLVSTFQSVFKRKSSENYLISNKNNRNNVRLPLLQQKGDDDIYFEYLLPEFTLLQMIHNKLLTEYNIMIFLYQLLTVVKFMHSAGVIHRDIDPSAITIDQNQCLKLTEFYFCFPSNCPVDLFFNDYDTSSFIYRAPETIWRNTTYTTAIDVWNIGVIFGEMILGKRLFKTQDFEDHLISISKLIGNPTAEDLSIVLSKSIFQYMEKIPKSTLTPSVGIKRRFKGASKDQIELLQGMLCWDPRKRMTIDQLLAHKYFSTIHDESMQIKCNEIFNLKYYPDFYKMKSDLVKKSIENEFLTPC</sequence>
<name>Y9296_DICDI</name>
<reference key="1">
    <citation type="journal article" date="2005" name="Nature">
        <title>The genome of the social amoeba Dictyostelium discoideum.</title>
        <authorList>
            <person name="Eichinger L."/>
            <person name="Pachebat J.A."/>
            <person name="Gloeckner G."/>
            <person name="Rajandream M.A."/>
            <person name="Sucgang R."/>
            <person name="Berriman M."/>
            <person name="Song J."/>
            <person name="Olsen R."/>
            <person name="Szafranski K."/>
            <person name="Xu Q."/>
            <person name="Tunggal B."/>
            <person name="Kummerfeld S."/>
            <person name="Madera M."/>
            <person name="Konfortov B.A."/>
            <person name="Rivero F."/>
            <person name="Bankier A.T."/>
            <person name="Lehmann R."/>
            <person name="Hamlin N."/>
            <person name="Davies R."/>
            <person name="Gaudet P."/>
            <person name="Fey P."/>
            <person name="Pilcher K."/>
            <person name="Chen G."/>
            <person name="Saunders D."/>
            <person name="Sodergren E.J."/>
            <person name="Davis P."/>
            <person name="Kerhornou A."/>
            <person name="Nie X."/>
            <person name="Hall N."/>
            <person name="Anjard C."/>
            <person name="Hemphill L."/>
            <person name="Bason N."/>
            <person name="Farbrother P."/>
            <person name="Desany B."/>
            <person name="Just E."/>
            <person name="Morio T."/>
            <person name="Rost R."/>
            <person name="Churcher C.M."/>
            <person name="Cooper J."/>
            <person name="Haydock S."/>
            <person name="van Driessche N."/>
            <person name="Cronin A."/>
            <person name="Goodhead I."/>
            <person name="Muzny D.M."/>
            <person name="Mourier T."/>
            <person name="Pain A."/>
            <person name="Lu M."/>
            <person name="Harper D."/>
            <person name="Lindsay R."/>
            <person name="Hauser H."/>
            <person name="James K.D."/>
            <person name="Quiles M."/>
            <person name="Madan Babu M."/>
            <person name="Saito T."/>
            <person name="Buchrieser C."/>
            <person name="Wardroper A."/>
            <person name="Felder M."/>
            <person name="Thangavelu M."/>
            <person name="Johnson D."/>
            <person name="Knights A."/>
            <person name="Loulseged H."/>
            <person name="Mungall K.L."/>
            <person name="Oliver K."/>
            <person name="Price C."/>
            <person name="Quail M.A."/>
            <person name="Urushihara H."/>
            <person name="Hernandez J."/>
            <person name="Rabbinowitsch E."/>
            <person name="Steffen D."/>
            <person name="Sanders M."/>
            <person name="Ma J."/>
            <person name="Kohara Y."/>
            <person name="Sharp S."/>
            <person name="Simmonds M.N."/>
            <person name="Spiegler S."/>
            <person name="Tivey A."/>
            <person name="Sugano S."/>
            <person name="White B."/>
            <person name="Walker D."/>
            <person name="Woodward J.R."/>
            <person name="Winckler T."/>
            <person name="Tanaka Y."/>
            <person name="Shaulsky G."/>
            <person name="Schleicher M."/>
            <person name="Weinstock G.M."/>
            <person name="Rosenthal A."/>
            <person name="Cox E.C."/>
            <person name="Chisholm R.L."/>
            <person name="Gibbs R.A."/>
            <person name="Loomis W.F."/>
            <person name="Platzer M."/>
            <person name="Kay R.R."/>
            <person name="Williams J.G."/>
            <person name="Dear P.H."/>
            <person name="Noegel A.A."/>
            <person name="Barrell B.G."/>
            <person name="Kuspa A."/>
        </authorList>
    </citation>
    <scope>NUCLEOTIDE SEQUENCE [LARGE SCALE GENOMIC DNA]</scope>
    <source>
        <strain>AX4</strain>
    </source>
</reference>
<organism>
    <name type="scientific">Dictyostelium discoideum</name>
    <name type="common">Social amoeba</name>
    <dbReference type="NCBI Taxonomy" id="44689"/>
    <lineage>
        <taxon>Eukaryota</taxon>
        <taxon>Amoebozoa</taxon>
        <taxon>Evosea</taxon>
        <taxon>Eumycetozoa</taxon>
        <taxon>Dictyostelia</taxon>
        <taxon>Dictyosteliales</taxon>
        <taxon>Dictyosteliaceae</taxon>
        <taxon>Dictyostelium</taxon>
    </lineage>
</organism>
<protein>
    <recommendedName>
        <fullName>Probable serine/threonine-protein kinase kinase DDB_G0280557</fullName>
        <ecNumber>2.7.11.1</ecNumber>
    </recommendedName>
</protein>